<organismHost>
    <name type="scientific">Apium graveolens</name>
    <name type="common">Celery</name>
    <dbReference type="NCBI Taxonomy" id="4045"/>
</organismHost>
<organismHost>
    <name type="scientific">Arachis hypogaea</name>
    <name type="common">Peanut</name>
    <dbReference type="NCBI Taxonomy" id="3818"/>
</organismHost>
<organismHost>
    <name type="scientific">Coronilla</name>
    <dbReference type="NCBI Taxonomy" id="53860"/>
</organismHost>
<organismHost>
    <name type="scientific">Glycine max</name>
    <name type="common">Soybean</name>
    <name type="synonym">Glycine hispida</name>
    <dbReference type="NCBI Taxonomy" id="3847"/>
</organismHost>
<organismHost>
    <name type="scientific">Lupinus luteus</name>
    <name type="common">European yellow lupine</name>
    <dbReference type="NCBI Taxonomy" id="3873"/>
</organismHost>
<organismHost>
    <name type="scientific">Medicago sativa</name>
    <name type="common">Alfalfa</name>
    <dbReference type="NCBI Taxonomy" id="3879"/>
</organismHost>
<organismHost>
    <name type="scientific">Nicotiana tabacum</name>
    <name type="common">Common tobacco</name>
    <dbReference type="NCBI Taxonomy" id="4097"/>
</organismHost>
<organismHost>
    <name type="scientific">Phaseolus angularis</name>
    <name type="common">Azuki bean</name>
    <name type="synonym">Vigna angularis</name>
    <dbReference type="NCBI Taxonomy" id="3914"/>
</organismHost>
<organismHost>
    <name type="scientific">Tephrosia</name>
    <dbReference type="NCBI Taxonomy" id="47097"/>
</organismHost>
<organismHost>
    <name type="scientific">Trifolium</name>
    <dbReference type="NCBI Taxonomy" id="3898"/>
</organismHost>
<organismHost>
    <name type="scientific">Vicia</name>
    <dbReference type="NCBI Taxonomy" id="3904"/>
</organismHost>
<accession>P22116</accession>
<gene>
    <name type="ORF">ORF3b</name>
</gene>
<keyword id="KW-0007">Acetylation</keyword>
<keyword id="KW-0167">Capsid protein</keyword>
<keyword id="KW-1015">Disulfide bond</keyword>
<keyword id="KW-0687">Ribonucleoprotein</keyword>
<keyword id="KW-0694">RNA-binding</keyword>
<keyword id="KW-1142">T=3 icosahedral capsid protein</keyword>
<keyword id="KW-0543">Viral nucleoprotein</keyword>
<keyword id="KW-0946">Virion</keyword>
<comment type="function">
    <text evidence="1">Capsid protein. Probably binds RNA and plays a role in packaging (By similarity).</text>
</comment>
<comment type="subcellular location">
    <subcellularLocation>
        <location evidence="4">Virion</location>
    </subcellularLocation>
</comment>
<comment type="domain">
    <text evidence="1">The N-terminal arginine-rich stretch does not seem to be the major RNA-binding region that allows formation of an infectious ribonucleoprotein complex.</text>
</comment>
<comment type="similarity">
    <text evidence="4">Belongs to the cucumovirus capsid protein family.</text>
</comment>
<sequence>MASKGSGNGSRRPRRGRRSFPIKEDAHARELRAVTAQLNRLVALTAARMPTLDHPTFVSSRKCAKGYTYTSLDVRPTKTEKGHSFGQRLNLPVPVSEFPKKKVSCVQLRLNPSPTFDSTVWVTLRKLPLGYSLASESVFKLFTDGLSAVLMYQHVPNGIQRDNKIIYDLSPVGTEIGDMSEYAIIVYSKDDTLEDDEILIHVDVEHQRIPSATALPV</sequence>
<name>CAPSD_PSVJ</name>
<reference key="1">
    <citation type="journal article" date="1991" name="Virology">
        <title>Nucleotide sequence of RNA 3 of peanut stunt cucumovirus.</title>
        <authorList>
            <person name="Karasawa A."/>
            <person name="Nakaho K."/>
            <person name="Kakutani T."/>
            <person name="Minobe Y."/>
            <person name="Ehara Y."/>
        </authorList>
    </citation>
    <scope>NUCLEOTIDE SEQUENCE [GENOMIC RNA]</scope>
</reference>
<evidence type="ECO:0000250" key="1"/>
<evidence type="ECO:0000250" key="2">
    <source>
        <dbReference type="UniProtKB" id="P23627"/>
    </source>
</evidence>
<evidence type="ECO:0000256" key="3">
    <source>
        <dbReference type="SAM" id="MobiDB-lite"/>
    </source>
</evidence>
<evidence type="ECO:0000305" key="4"/>
<dbReference type="EMBL" id="D00668">
    <property type="protein sequence ID" value="BAA00572.1"/>
    <property type="molecule type" value="Genomic_RNA"/>
</dbReference>
<dbReference type="PIR" id="B40786">
    <property type="entry name" value="VCVXPS"/>
</dbReference>
<dbReference type="SMR" id="P22116"/>
<dbReference type="GO" id="GO:1990904">
    <property type="term" value="C:ribonucleoprotein complex"/>
    <property type="evidence" value="ECO:0007669"/>
    <property type="project" value="UniProtKB-KW"/>
</dbReference>
<dbReference type="GO" id="GO:0039617">
    <property type="term" value="C:T=3 icosahedral viral capsid"/>
    <property type="evidence" value="ECO:0007669"/>
    <property type="project" value="UniProtKB-KW"/>
</dbReference>
<dbReference type="GO" id="GO:0019013">
    <property type="term" value="C:viral nucleocapsid"/>
    <property type="evidence" value="ECO:0007669"/>
    <property type="project" value="UniProtKB-KW"/>
</dbReference>
<dbReference type="GO" id="GO:0003723">
    <property type="term" value="F:RNA binding"/>
    <property type="evidence" value="ECO:0007669"/>
    <property type="project" value="UniProtKB-KW"/>
</dbReference>
<dbReference type="GO" id="GO:0005198">
    <property type="term" value="F:structural molecule activity"/>
    <property type="evidence" value="ECO:0007669"/>
    <property type="project" value="InterPro"/>
</dbReference>
<dbReference type="Gene3D" id="2.60.120.530">
    <property type="entry name" value="Cucumovirus coat protein, subunit A"/>
    <property type="match status" value="1"/>
</dbReference>
<dbReference type="InterPro" id="IPR000247">
    <property type="entry name" value="Cucumovirus_coat"/>
</dbReference>
<dbReference type="InterPro" id="IPR037137">
    <property type="entry name" value="Cucumovirus_coat_Asu_sf"/>
</dbReference>
<dbReference type="Pfam" id="PF00760">
    <property type="entry name" value="Cucumo_coat"/>
    <property type="match status" value="1"/>
</dbReference>
<dbReference type="PRINTS" id="PR00222">
    <property type="entry name" value="CUCUMOCOAT"/>
</dbReference>
<dbReference type="SUPFAM" id="SSF88633">
    <property type="entry name" value="Positive stranded ssRNA viruses"/>
    <property type="match status" value="1"/>
</dbReference>
<proteinExistence type="inferred from homology"/>
<feature type="chain" id="PRO_0000083223" description="Capsid protein">
    <location>
        <begin position="1"/>
        <end position="217"/>
    </location>
</feature>
<feature type="region of interest" description="Disordered" evidence="3">
    <location>
        <begin position="1"/>
        <end position="24"/>
    </location>
</feature>
<feature type="compositionally biased region" description="Basic residues" evidence="3">
    <location>
        <begin position="11"/>
        <end position="20"/>
    </location>
</feature>
<feature type="modified residue" description="N-acetylmethionine; by host" evidence="1">
    <location>
        <position position="1"/>
    </location>
</feature>
<feature type="disulfide bond" evidence="2">
    <location>
        <begin position="63"/>
        <end position="105"/>
    </location>
</feature>
<organism>
    <name type="scientific">Peanut stunt virus (strain J)</name>
    <name type="common">PSV</name>
    <dbReference type="NCBI Taxonomy" id="12314"/>
    <lineage>
        <taxon>Viruses</taxon>
        <taxon>Riboviria</taxon>
        <taxon>Orthornavirae</taxon>
        <taxon>Kitrinoviricota</taxon>
        <taxon>Alsuviricetes</taxon>
        <taxon>Martellivirales</taxon>
        <taxon>Bromoviridae</taxon>
        <taxon>Cucumovirus</taxon>
        <taxon>Peanut stunt virus</taxon>
    </lineage>
</organism>
<protein>
    <recommendedName>
        <fullName>Capsid protein</fullName>
        <shortName>CP</shortName>
    </recommendedName>
    <alternativeName>
        <fullName>Coat protein</fullName>
    </alternativeName>
</protein>